<accession>Q321N8</accession>
<proteinExistence type="inferred from homology"/>
<gene>
    <name evidence="1" type="primary">astD</name>
    <name type="ordered locus">SBO_1344</name>
</gene>
<name>ASTD_SHIBS</name>
<keyword id="KW-0056">Arginine metabolism</keyword>
<keyword id="KW-0520">NAD</keyword>
<keyword id="KW-0560">Oxidoreductase</keyword>
<dbReference type="EC" id="1.2.1.71" evidence="1"/>
<dbReference type="EMBL" id="CP000036">
    <property type="protein sequence ID" value="ABB65970.1"/>
    <property type="molecule type" value="Genomic_DNA"/>
</dbReference>
<dbReference type="RefSeq" id="WP_000177214.1">
    <property type="nucleotide sequence ID" value="NC_007613.1"/>
</dbReference>
<dbReference type="SMR" id="Q321N8"/>
<dbReference type="KEGG" id="sbo:SBO_1344"/>
<dbReference type="HOGENOM" id="CLU_005391_1_0_6"/>
<dbReference type="UniPathway" id="UPA00185">
    <property type="reaction ID" value="UER00282"/>
</dbReference>
<dbReference type="Proteomes" id="UP000007067">
    <property type="component" value="Chromosome"/>
</dbReference>
<dbReference type="GO" id="GO:0043824">
    <property type="term" value="F:succinylglutamate-semialdehyde dehydrogenase activity"/>
    <property type="evidence" value="ECO:0007669"/>
    <property type="project" value="UniProtKB-EC"/>
</dbReference>
<dbReference type="GO" id="GO:0019544">
    <property type="term" value="P:arginine catabolic process to glutamate"/>
    <property type="evidence" value="ECO:0007669"/>
    <property type="project" value="UniProtKB-UniRule"/>
</dbReference>
<dbReference type="GO" id="GO:0019545">
    <property type="term" value="P:arginine catabolic process to succinate"/>
    <property type="evidence" value="ECO:0007669"/>
    <property type="project" value="UniProtKB-UniRule"/>
</dbReference>
<dbReference type="CDD" id="cd07095">
    <property type="entry name" value="ALDH_SGSD_AstD"/>
    <property type="match status" value="1"/>
</dbReference>
<dbReference type="FunFam" id="3.40.309.10:FF:000013">
    <property type="entry name" value="N-succinylglutamate 5-semialdehyde dehydrogenase"/>
    <property type="match status" value="1"/>
</dbReference>
<dbReference type="FunFam" id="3.40.605.10:FF:000010">
    <property type="entry name" value="N-succinylglutamate 5-semialdehyde dehydrogenase"/>
    <property type="match status" value="1"/>
</dbReference>
<dbReference type="Gene3D" id="3.40.605.10">
    <property type="entry name" value="Aldehyde Dehydrogenase, Chain A, domain 1"/>
    <property type="match status" value="1"/>
</dbReference>
<dbReference type="Gene3D" id="3.40.309.10">
    <property type="entry name" value="Aldehyde Dehydrogenase, Chain A, domain 2"/>
    <property type="match status" value="1"/>
</dbReference>
<dbReference type="HAMAP" id="MF_01174">
    <property type="entry name" value="Aldedh_AstD"/>
    <property type="match status" value="1"/>
</dbReference>
<dbReference type="InterPro" id="IPR016161">
    <property type="entry name" value="Ald_DH/histidinol_DH"/>
</dbReference>
<dbReference type="InterPro" id="IPR016163">
    <property type="entry name" value="Ald_DH_C"/>
</dbReference>
<dbReference type="InterPro" id="IPR016160">
    <property type="entry name" value="Ald_DH_CS_CYS"/>
</dbReference>
<dbReference type="InterPro" id="IPR029510">
    <property type="entry name" value="Ald_DH_CS_GLU"/>
</dbReference>
<dbReference type="InterPro" id="IPR016162">
    <property type="entry name" value="Ald_DH_N"/>
</dbReference>
<dbReference type="InterPro" id="IPR015590">
    <property type="entry name" value="Aldehyde_DH_dom"/>
</dbReference>
<dbReference type="InterPro" id="IPR017649">
    <property type="entry name" value="SuccinylGlu_semiald_DH_AstD"/>
</dbReference>
<dbReference type="NCBIfam" id="TIGR03240">
    <property type="entry name" value="arg_catab_astD"/>
    <property type="match status" value="1"/>
</dbReference>
<dbReference type="NCBIfam" id="NF006992">
    <property type="entry name" value="PRK09457.1"/>
    <property type="match status" value="1"/>
</dbReference>
<dbReference type="PANTHER" id="PTHR11699">
    <property type="entry name" value="ALDEHYDE DEHYDROGENASE-RELATED"/>
    <property type="match status" value="1"/>
</dbReference>
<dbReference type="Pfam" id="PF00171">
    <property type="entry name" value="Aldedh"/>
    <property type="match status" value="1"/>
</dbReference>
<dbReference type="SUPFAM" id="SSF53720">
    <property type="entry name" value="ALDH-like"/>
    <property type="match status" value="1"/>
</dbReference>
<dbReference type="PROSITE" id="PS00070">
    <property type="entry name" value="ALDEHYDE_DEHYDR_CYS"/>
    <property type="match status" value="1"/>
</dbReference>
<dbReference type="PROSITE" id="PS00687">
    <property type="entry name" value="ALDEHYDE_DEHYDR_GLU"/>
    <property type="match status" value="1"/>
</dbReference>
<organism>
    <name type="scientific">Shigella boydii serotype 4 (strain Sb227)</name>
    <dbReference type="NCBI Taxonomy" id="300268"/>
    <lineage>
        <taxon>Bacteria</taxon>
        <taxon>Pseudomonadati</taxon>
        <taxon>Pseudomonadota</taxon>
        <taxon>Gammaproteobacteria</taxon>
        <taxon>Enterobacterales</taxon>
        <taxon>Enterobacteriaceae</taxon>
        <taxon>Shigella</taxon>
    </lineage>
</organism>
<reference key="1">
    <citation type="journal article" date="2005" name="Nucleic Acids Res.">
        <title>Genome dynamics and diversity of Shigella species, the etiologic agents of bacillary dysentery.</title>
        <authorList>
            <person name="Yang F."/>
            <person name="Yang J."/>
            <person name="Zhang X."/>
            <person name="Chen L."/>
            <person name="Jiang Y."/>
            <person name="Yan Y."/>
            <person name="Tang X."/>
            <person name="Wang J."/>
            <person name="Xiong Z."/>
            <person name="Dong J."/>
            <person name="Xue Y."/>
            <person name="Zhu Y."/>
            <person name="Xu X."/>
            <person name="Sun L."/>
            <person name="Chen S."/>
            <person name="Nie H."/>
            <person name="Peng J."/>
            <person name="Xu J."/>
            <person name="Wang Y."/>
            <person name="Yuan Z."/>
            <person name="Wen Y."/>
            <person name="Yao Z."/>
            <person name="Shen Y."/>
            <person name="Qiang B."/>
            <person name="Hou Y."/>
            <person name="Yu J."/>
            <person name="Jin Q."/>
        </authorList>
    </citation>
    <scope>NUCLEOTIDE SEQUENCE [LARGE SCALE GENOMIC DNA]</scope>
    <source>
        <strain>Sb227</strain>
    </source>
</reference>
<evidence type="ECO:0000255" key="1">
    <source>
        <dbReference type="HAMAP-Rule" id="MF_01174"/>
    </source>
</evidence>
<sequence>MTLWINGDWITGQGASRVKRNPVSGEVLWQGNDADAAQVEQACRAARAAFPRWARLSLAERQVVVERFAGLLESNKAELTAIIARETGKLRWEAATEVTAMINKIAISIKAYHVRTGEQRSEMPDGAASLRHRPHGVLAVFGPYNFPGHLPNGHIVPALLAGNTIIFKPSELTPWSGEAVMRLWQQAGLPPGVLNLVQGGRETGQALSALEDLDGLLFTGRANTGYQLHRQLSGQPEKILALEMGGNNPLIIDEVADIDAAVHLTIQSAFVTAGQRCTCARRLLLKSGAQGDAFLARLVAVSQRLTPGNWDDEPQPFIGGLISEQAAQQVVTAWQQLEAMGGRTLLAPRLLQLETSLLTPGIIEMTGVAGVPDEEVFGPLLRVWRYDSFEEAILMANNTRFGLSCGLVSPEREKFDQLLLEARAGIVNWNKPLTGAASTAPFGGIGASGNHRPSAWYAADYCAWPMASLESDSLTLPATLNPGLDFSDEVVR</sequence>
<protein>
    <recommendedName>
        <fullName evidence="1">N-succinylglutamate 5-semialdehyde dehydrogenase</fullName>
        <ecNumber evidence="1">1.2.1.71</ecNumber>
    </recommendedName>
    <alternativeName>
        <fullName evidence="1">Succinylglutamic semialdehyde dehydrogenase</fullName>
        <shortName evidence="1">SGSD</shortName>
    </alternativeName>
</protein>
<feature type="chain" id="PRO_0000262427" description="N-succinylglutamate 5-semialdehyde dehydrogenase">
    <location>
        <begin position="1"/>
        <end position="492"/>
    </location>
</feature>
<feature type="active site" evidence="1">
    <location>
        <position position="243"/>
    </location>
</feature>
<feature type="active site" evidence="1">
    <location>
        <position position="277"/>
    </location>
</feature>
<feature type="binding site" evidence="1">
    <location>
        <begin position="220"/>
        <end position="225"/>
    </location>
    <ligand>
        <name>NAD(+)</name>
        <dbReference type="ChEBI" id="CHEBI:57540"/>
    </ligand>
</feature>
<comment type="function">
    <text evidence="1">Catalyzes the NAD-dependent reduction of succinylglutamate semialdehyde into succinylglutamate.</text>
</comment>
<comment type="catalytic activity">
    <reaction evidence="1">
        <text>N-succinyl-L-glutamate 5-semialdehyde + NAD(+) + H2O = N-succinyl-L-glutamate + NADH + 2 H(+)</text>
        <dbReference type="Rhea" id="RHEA:10812"/>
        <dbReference type="ChEBI" id="CHEBI:15377"/>
        <dbReference type="ChEBI" id="CHEBI:15378"/>
        <dbReference type="ChEBI" id="CHEBI:57540"/>
        <dbReference type="ChEBI" id="CHEBI:57945"/>
        <dbReference type="ChEBI" id="CHEBI:58520"/>
        <dbReference type="ChEBI" id="CHEBI:58763"/>
        <dbReference type="EC" id="1.2.1.71"/>
    </reaction>
</comment>
<comment type="pathway">
    <text evidence="1">Amino-acid degradation; L-arginine degradation via AST pathway; L-glutamate and succinate from L-arginine: step 4/5.</text>
</comment>
<comment type="similarity">
    <text evidence="1">Belongs to the aldehyde dehydrogenase family. AstD subfamily.</text>
</comment>